<reference key="1">
    <citation type="submission" date="2007-12" db="EMBL/GenBank/DDBJ databases">
        <title>Complete sequence of Methylobacterium extorquens PA1.</title>
        <authorList>
            <consortium name="US DOE Joint Genome Institute"/>
            <person name="Copeland A."/>
            <person name="Lucas S."/>
            <person name="Lapidus A."/>
            <person name="Barry K."/>
            <person name="Glavina del Rio T."/>
            <person name="Dalin E."/>
            <person name="Tice H."/>
            <person name="Pitluck S."/>
            <person name="Saunders E."/>
            <person name="Brettin T."/>
            <person name="Bruce D."/>
            <person name="Detter J.C."/>
            <person name="Han C."/>
            <person name="Schmutz J."/>
            <person name="Larimer F."/>
            <person name="Land M."/>
            <person name="Hauser L."/>
            <person name="Kyrpides N."/>
            <person name="Kim E."/>
            <person name="Marx C."/>
            <person name="Richardson P."/>
        </authorList>
    </citation>
    <scope>NUCLEOTIDE SEQUENCE [LARGE SCALE GENOMIC DNA]</scope>
    <source>
        <strain>PA1</strain>
    </source>
</reference>
<comment type="function">
    <text evidence="1">Forms part of the ribosomal stalk which helps the ribosome interact with GTP-bound translation factors.</text>
</comment>
<comment type="subunit">
    <text evidence="1">Part of the ribosomal stalk of the 50S ribosomal subunit. Interacts with L10 and the large rRNA to form the base of the stalk. L10 forms an elongated spine to which L12 dimers bind in a sequential fashion forming a multimeric L10(L12)X complex.</text>
</comment>
<comment type="PTM">
    <text evidence="1">One or more lysine residues are methylated.</text>
</comment>
<comment type="similarity">
    <text evidence="1">Belongs to the universal ribosomal protein uL11 family.</text>
</comment>
<keyword id="KW-0488">Methylation</keyword>
<keyword id="KW-0687">Ribonucleoprotein</keyword>
<keyword id="KW-0689">Ribosomal protein</keyword>
<keyword id="KW-0694">RNA-binding</keyword>
<keyword id="KW-0699">rRNA-binding</keyword>
<sequence>MAKKITGYVKLQVPAGAANPSPPIGPALGQRGLNIMEFCKAFNAKTAQMEKGTPIPVIITAYQDRSFTFEMKQPPVTFFLKKAVGLKIGKKPASGSKTPGKGPTVGKITEAQLREIAEKKMPDLNCDSVDAAVAMIRGSARAMGLEVVA</sequence>
<name>RL11_METEP</name>
<organism>
    <name type="scientific">Methylorubrum extorquens (strain PA1)</name>
    <name type="common">Methylobacterium extorquens</name>
    <dbReference type="NCBI Taxonomy" id="419610"/>
    <lineage>
        <taxon>Bacteria</taxon>
        <taxon>Pseudomonadati</taxon>
        <taxon>Pseudomonadota</taxon>
        <taxon>Alphaproteobacteria</taxon>
        <taxon>Hyphomicrobiales</taxon>
        <taxon>Methylobacteriaceae</taxon>
        <taxon>Methylorubrum</taxon>
    </lineage>
</organism>
<proteinExistence type="inferred from homology"/>
<evidence type="ECO:0000255" key="1">
    <source>
        <dbReference type="HAMAP-Rule" id="MF_00736"/>
    </source>
</evidence>
<evidence type="ECO:0000305" key="2"/>
<protein>
    <recommendedName>
        <fullName evidence="1">Large ribosomal subunit protein uL11</fullName>
    </recommendedName>
    <alternativeName>
        <fullName evidence="2">50S ribosomal protein L11</fullName>
    </alternativeName>
</protein>
<gene>
    <name evidence="1" type="primary">rplK</name>
    <name type="ordered locus">Mext_3998</name>
</gene>
<dbReference type="EMBL" id="CP000908">
    <property type="protein sequence ID" value="ABY32369.1"/>
    <property type="molecule type" value="Genomic_DNA"/>
</dbReference>
<dbReference type="RefSeq" id="WP_003597508.1">
    <property type="nucleotide sequence ID" value="NC_010172.1"/>
</dbReference>
<dbReference type="SMR" id="A9W8M0"/>
<dbReference type="GeneID" id="72991716"/>
<dbReference type="KEGG" id="mex:Mext_3998"/>
<dbReference type="eggNOG" id="COG0080">
    <property type="taxonomic scope" value="Bacteria"/>
</dbReference>
<dbReference type="HOGENOM" id="CLU_074237_2_0_5"/>
<dbReference type="BioCyc" id="MEXT419610:MEXT_RS20080-MONOMER"/>
<dbReference type="GO" id="GO:0022625">
    <property type="term" value="C:cytosolic large ribosomal subunit"/>
    <property type="evidence" value="ECO:0007669"/>
    <property type="project" value="TreeGrafter"/>
</dbReference>
<dbReference type="GO" id="GO:0070180">
    <property type="term" value="F:large ribosomal subunit rRNA binding"/>
    <property type="evidence" value="ECO:0007669"/>
    <property type="project" value="UniProtKB-UniRule"/>
</dbReference>
<dbReference type="GO" id="GO:0003735">
    <property type="term" value="F:structural constituent of ribosome"/>
    <property type="evidence" value="ECO:0007669"/>
    <property type="project" value="InterPro"/>
</dbReference>
<dbReference type="GO" id="GO:0006412">
    <property type="term" value="P:translation"/>
    <property type="evidence" value="ECO:0007669"/>
    <property type="project" value="UniProtKB-UniRule"/>
</dbReference>
<dbReference type="CDD" id="cd00349">
    <property type="entry name" value="Ribosomal_L11"/>
    <property type="match status" value="1"/>
</dbReference>
<dbReference type="FunFam" id="3.30.1550.10:FF:000001">
    <property type="entry name" value="50S ribosomal protein L11"/>
    <property type="match status" value="1"/>
</dbReference>
<dbReference type="Gene3D" id="1.10.10.250">
    <property type="entry name" value="Ribosomal protein L11, C-terminal domain"/>
    <property type="match status" value="1"/>
</dbReference>
<dbReference type="Gene3D" id="3.30.1550.10">
    <property type="entry name" value="Ribosomal protein L11/L12, N-terminal domain"/>
    <property type="match status" value="1"/>
</dbReference>
<dbReference type="HAMAP" id="MF_00736">
    <property type="entry name" value="Ribosomal_uL11"/>
    <property type="match status" value="1"/>
</dbReference>
<dbReference type="InterPro" id="IPR000911">
    <property type="entry name" value="Ribosomal_uL11"/>
</dbReference>
<dbReference type="InterPro" id="IPR006519">
    <property type="entry name" value="Ribosomal_uL11_bac-typ"/>
</dbReference>
<dbReference type="InterPro" id="IPR020783">
    <property type="entry name" value="Ribosomal_uL11_C"/>
</dbReference>
<dbReference type="InterPro" id="IPR036769">
    <property type="entry name" value="Ribosomal_uL11_C_sf"/>
</dbReference>
<dbReference type="InterPro" id="IPR020784">
    <property type="entry name" value="Ribosomal_uL11_N"/>
</dbReference>
<dbReference type="InterPro" id="IPR036796">
    <property type="entry name" value="Ribosomal_uL11_N_sf"/>
</dbReference>
<dbReference type="NCBIfam" id="TIGR01632">
    <property type="entry name" value="L11_bact"/>
    <property type="match status" value="1"/>
</dbReference>
<dbReference type="PANTHER" id="PTHR11661">
    <property type="entry name" value="60S RIBOSOMAL PROTEIN L12"/>
    <property type="match status" value="1"/>
</dbReference>
<dbReference type="PANTHER" id="PTHR11661:SF1">
    <property type="entry name" value="LARGE RIBOSOMAL SUBUNIT PROTEIN UL11M"/>
    <property type="match status" value="1"/>
</dbReference>
<dbReference type="Pfam" id="PF00298">
    <property type="entry name" value="Ribosomal_L11"/>
    <property type="match status" value="1"/>
</dbReference>
<dbReference type="Pfam" id="PF03946">
    <property type="entry name" value="Ribosomal_L11_N"/>
    <property type="match status" value="1"/>
</dbReference>
<dbReference type="SMART" id="SM00649">
    <property type="entry name" value="RL11"/>
    <property type="match status" value="1"/>
</dbReference>
<dbReference type="SUPFAM" id="SSF54747">
    <property type="entry name" value="Ribosomal L11/L12e N-terminal domain"/>
    <property type="match status" value="1"/>
</dbReference>
<dbReference type="SUPFAM" id="SSF46906">
    <property type="entry name" value="Ribosomal protein L11, C-terminal domain"/>
    <property type="match status" value="1"/>
</dbReference>
<feature type="chain" id="PRO_1000195667" description="Large ribosomal subunit protein uL11">
    <location>
        <begin position="1"/>
        <end position="149"/>
    </location>
</feature>
<accession>A9W8M0</accession>